<keyword id="KW-0012">Acyltransferase</keyword>
<keyword id="KW-0443">Lipid metabolism</keyword>
<keyword id="KW-1185">Reference proteome</keyword>
<keyword id="KW-0808">Transferase</keyword>
<protein>
    <recommendedName>
        <fullName evidence="1">Probable acyltransferase FabY</fullName>
        <ecNumber evidence="2">2.3.1.-</ecNumber>
    </recommendedName>
</protein>
<organism>
    <name type="scientific">Escherichia coli O6:H1 (strain CFT073 / ATCC 700928 / UPEC)</name>
    <dbReference type="NCBI Taxonomy" id="199310"/>
    <lineage>
        <taxon>Bacteria</taxon>
        <taxon>Pseudomonadati</taxon>
        <taxon>Pseudomonadota</taxon>
        <taxon>Gammaproteobacteria</taxon>
        <taxon>Enterobacterales</taxon>
        <taxon>Enterobacteriaceae</taxon>
        <taxon>Escherichia</taxon>
    </lineage>
</organism>
<sequence>MSQLPGLSRETRESIAMYHLRVPQTEEELERYYQFRWEMLRKPLHQPKGSERDAWDAMAHHQMVVDEQGNLVAVGRLYINADNEASIRFMAVHPDVQDKGLGTLMAMTLESVARQEGVKRVTCSAREDAVEFFAKLGFVNQGEITTPTTTPIRHFLMIKPVATLDDILHRGDWCAQLQQAWYEHIPLSEKMGVRIQQYTGQKFITTMPETGNQNPHHTLFAGSLFSLATLTGWGLIWLMLRERHLGGTIILADAHIRYSKPISGKPHAVADLGALSGDLDRLARGRKARVQMQVEIFGDETPGAVFEGTYIVLPAKPFGPYEEGGNEEE</sequence>
<proteinExistence type="inferred from homology"/>
<dbReference type="EC" id="2.3.1.-" evidence="2"/>
<dbReference type="EMBL" id="AE014075">
    <property type="protein sequence ID" value="AAN83264.1"/>
    <property type="molecule type" value="Genomic_DNA"/>
</dbReference>
<dbReference type="SMR" id="P0ADQ3"/>
<dbReference type="STRING" id="199310.c4835"/>
<dbReference type="KEGG" id="ecc:c4835"/>
<dbReference type="eggNOG" id="COG0456">
    <property type="taxonomic scope" value="Bacteria"/>
</dbReference>
<dbReference type="HOGENOM" id="CLU_063776_0_0_6"/>
<dbReference type="BioCyc" id="ECOL199310:C4835-MONOMER"/>
<dbReference type="UniPathway" id="UPA00094"/>
<dbReference type="Proteomes" id="UP000001410">
    <property type="component" value="Chromosome"/>
</dbReference>
<dbReference type="GO" id="GO:0008080">
    <property type="term" value="F:N-acetyltransferase activity"/>
    <property type="evidence" value="ECO:0007669"/>
    <property type="project" value="TreeGrafter"/>
</dbReference>
<dbReference type="GO" id="GO:0006633">
    <property type="term" value="P:fatty acid biosynthetic process"/>
    <property type="evidence" value="ECO:0007669"/>
    <property type="project" value="UniProtKB-UniPathway"/>
</dbReference>
<dbReference type="CDD" id="cd04301">
    <property type="entry name" value="NAT_SF"/>
    <property type="match status" value="1"/>
</dbReference>
<dbReference type="FunFam" id="3.40.630.30:FF:000012">
    <property type="entry name" value="GNAT family acetyltransferase"/>
    <property type="match status" value="1"/>
</dbReference>
<dbReference type="Gene3D" id="3.40.630.30">
    <property type="match status" value="1"/>
</dbReference>
<dbReference type="Gene3D" id="3.10.129.10">
    <property type="entry name" value="Hotdog Thioesterase"/>
    <property type="match status" value="1"/>
</dbReference>
<dbReference type="InterPro" id="IPR016181">
    <property type="entry name" value="Acyl_CoA_acyltransferase"/>
</dbReference>
<dbReference type="InterPro" id="IPR000182">
    <property type="entry name" value="GNAT_dom"/>
</dbReference>
<dbReference type="InterPro" id="IPR039143">
    <property type="entry name" value="GNPNAT1-like"/>
</dbReference>
<dbReference type="InterPro" id="IPR029069">
    <property type="entry name" value="HotDog_dom_sf"/>
</dbReference>
<dbReference type="InterPro" id="IPR012660">
    <property type="entry name" value="YiiD_C"/>
</dbReference>
<dbReference type="NCBIfam" id="TIGR02447">
    <property type="entry name" value="yiiD_Cterm"/>
    <property type="match status" value="1"/>
</dbReference>
<dbReference type="PANTHER" id="PTHR13355">
    <property type="entry name" value="GLUCOSAMINE 6-PHOSPHATE N-ACETYLTRANSFERASE"/>
    <property type="match status" value="1"/>
</dbReference>
<dbReference type="PANTHER" id="PTHR13355:SF22">
    <property type="entry name" value="SLL0786 PROTEIN"/>
    <property type="match status" value="1"/>
</dbReference>
<dbReference type="Pfam" id="PF00583">
    <property type="entry name" value="Acetyltransf_1"/>
    <property type="match status" value="1"/>
</dbReference>
<dbReference type="Pfam" id="PF09500">
    <property type="entry name" value="YiiD_C"/>
    <property type="match status" value="1"/>
</dbReference>
<dbReference type="SUPFAM" id="SSF55729">
    <property type="entry name" value="Acyl-CoA N-acyltransferases (Nat)"/>
    <property type="match status" value="1"/>
</dbReference>
<dbReference type="SUPFAM" id="SSF54637">
    <property type="entry name" value="Thioesterase/thiol ester dehydrase-isomerase"/>
    <property type="match status" value="1"/>
</dbReference>
<dbReference type="PROSITE" id="PS51186">
    <property type="entry name" value="GNAT"/>
    <property type="match status" value="1"/>
</dbReference>
<name>FABY_ECOL6</name>
<comment type="function">
    <text evidence="1">Supports initiation of fatty acid biosynthesis in the absence of FabH.</text>
</comment>
<comment type="pathway">
    <text evidence="1">Lipid metabolism; fatty acid biosynthesis.</text>
</comment>
<comment type="similarity">
    <text evidence="3">Belongs to the acetyltransferase family. FabY subfamily.</text>
</comment>
<accession>P0ADQ3</accession>
<accession>P32148</accession>
<gene>
    <name evidence="1" type="primary">fabY</name>
    <name type="synonym">yiiD</name>
    <name type="ordered locus">c4835</name>
</gene>
<feature type="chain" id="PRO_0000169681" description="Probable acyltransferase FabY">
    <location>
        <begin position="1"/>
        <end position="329"/>
    </location>
</feature>
<feature type="domain" description="N-acetyltransferase" evidence="2">
    <location>
        <begin position="18"/>
        <end position="162"/>
    </location>
</feature>
<reference key="1">
    <citation type="journal article" date="2002" name="Proc. Natl. Acad. Sci. U.S.A.">
        <title>Extensive mosaic structure revealed by the complete genome sequence of uropathogenic Escherichia coli.</title>
        <authorList>
            <person name="Welch R.A."/>
            <person name="Burland V."/>
            <person name="Plunkett G. III"/>
            <person name="Redford P."/>
            <person name="Roesch P."/>
            <person name="Rasko D."/>
            <person name="Buckles E.L."/>
            <person name="Liou S.-R."/>
            <person name="Boutin A."/>
            <person name="Hackett J."/>
            <person name="Stroud D."/>
            <person name="Mayhew G.F."/>
            <person name="Rose D.J."/>
            <person name="Zhou S."/>
            <person name="Schwartz D.C."/>
            <person name="Perna N.T."/>
            <person name="Mobley H.L.T."/>
            <person name="Donnenberg M.S."/>
            <person name="Blattner F.R."/>
        </authorList>
    </citation>
    <scope>NUCLEOTIDE SEQUENCE [LARGE SCALE GENOMIC DNA]</scope>
    <source>
        <strain>CFT073 / ATCC 700928 / UPEC</strain>
    </source>
</reference>
<evidence type="ECO:0000250" key="1">
    <source>
        <dbReference type="UniProtKB" id="P0ADQ2"/>
    </source>
</evidence>
<evidence type="ECO:0000255" key="2">
    <source>
        <dbReference type="PROSITE-ProRule" id="PRU00532"/>
    </source>
</evidence>
<evidence type="ECO:0000305" key="3"/>